<name>SPRT_ENT38</name>
<proteinExistence type="inferred from homology"/>
<sequence length="165" mass="19312">MKTPRLPIALQQAVMRCLREKLAQANLKLGRNYPEPKLVYQQRGTSAGTAWLESYEIRLNPVLMMENQQAFVDEVVPHELAHLLVWKHFGRVAPHGKEWKWMMEAVLGVPARRTHQFELESVRRNTFPYRCQCQQHQLTVRRHNRVVRGEATYRCVKCGEPLVAE</sequence>
<gene>
    <name evidence="1" type="primary">sprT</name>
    <name type="ordered locus">Ent638_3348</name>
</gene>
<reference key="1">
    <citation type="journal article" date="2010" name="PLoS Genet.">
        <title>Genome sequence of the plant growth promoting endophytic bacterium Enterobacter sp. 638.</title>
        <authorList>
            <person name="Taghavi S."/>
            <person name="van der Lelie D."/>
            <person name="Hoffman A."/>
            <person name="Zhang Y.B."/>
            <person name="Walla M.D."/>
            <person name="Vangronsveld J."/>
            <person name="Newman L."/>
            <person name="Monchy S."/>
        </authorList>
    </citation>
    <scope>NUCLEOTIDE SEQUENCE [LARGE SCALE GENOMIC DNA]</scope>
    <source>
        <strain>638</strain>
    </source>
</reference>
<comment type="cofactor">
    <cofactor evidence="1">
        <name>Zn(2+)</name>
        <dbReference type="ChEBI" id="CHEBI:29105"/>
    </cofactor>
    <text evidence="1">Binds 1 zinc ion.</text>
</comment>
<comment type="subcellular location">
    <subcellularLocation>
        <location evidence="1">Cytoplasm</location>
    </subcellularLocation>
</comment>
<comment type="similarity">
    <text evidence="1">Belongs to the SprT family.</text>
</comment>
<keyword id="KW-0963">Cytoplasm</keyword>
<keyword id="KW-0479">Metal-binding</keyword>
<keyword id="KW-0862">Zinc</keyword>
<accession>A4WE80</accession>
<protein>
    <recommendedName>
        <fullName evidence="1">Protein SprT</fullName>
    </recommendedName>
</protein>
<evidence type="ECO:0000255" key="1">
    <source>
        <dbReference type="HAMAP-Rule" id="MF_00746"/>
    </source>
</evidence>
<feature type="chain" id="PRO_1000062177" description="Protein SprT">
    <location>
        <begin position="1"/>
        <end position="165"/>
    </location>
</feature>
<feature type="domain" description="SprT-like" evidence="1">
    <location>
        <begin position="19"/>
        <end position="163"/>
    </location>
</feature>
<feature type="active site" evidence="1">
    <location>
        <position position="79"/>
    </location>
</feature>
<feature type="binding site" evidence="1">
    <location>
        <position position="78"/>
    </location>
    <ligand>
        <name>Zn(2+)</name>
        <dbReference type="ChEBI" id="CHEBI:29105"/>
    </ligand>
</feature>
<feature type="binding site" evidence="1">
    <location>
        <position position="82"/>
    </location>
    <ligand>
        <name>Zn(2+)</name>
        <dbReference type="ChEBI" id="CHEBI:29105"/>
    </ligand>
</feature>
<dbReference type="EMBL" id="CP000653">
    <property type="protein sequence ID" value="ABP62010.1"/>
    <property type="molecule type" value="Genomic_DNA"/>
</dbReference>
<dbReference type="RefSeq" id="WP_015960338.1">
    <property type="nucleotide sequence ID" value="NC_009436.1"/>
</dbReference>
<dbReference type="STRING" id="399742.Ent638_3348"/>
<dbReference type="GeneID" id="93306313"/>
<dbReference type="KEGG" id="ent:Ent638_3348"/>
<dbReference type="eggNOG" id="COG3091">
    <property type="taxonomic scope" value="Bacteria"/>
</dbReference>
<dbReference type="HOGENOM" id="CLU_113336_0_1_6"/>
<dbReference type="OrthoDB" id="267364at2"/>
<dbReference type="Proteomes" id="UP000000230">
    <property type="component" value="Chromosome"/>
</dbReference>
<dbReference type="GO" id="GO:0005737">
    <property type="term" value="C:cytoplasm"/>
    <property type="evidence" value="ECO:0007669"/>
    <property type="project" value="UniProtKB-SubCell"/>
</dbReference>
<dbReference type="GO" id="GO:0008270">
    <property type="term" value="F:zinc ion binding"/>
    <property type="evidence" value="ECO:0007669"/>
    <property type="project" value="UniProtKB-UniRule"/>
</dbReference>
<dbReference type="GO" id="GO:0006950">
    <property type="term" value="P:response to stress"/>
    <property type="evidence" value="ECO:0007669"/>
    <property type="project" value="UniProtKB-ARBA"/>
</dbReference>
<dbReference type="Gene3D" id="3.30.2010.10">
    <property type="entry name" value="Metalloproteases ('zincins'), catalytic domain"/>
    <property type="match status" value="1"/>
</dbReference>
<dbReference type="HAMAP" id="MF_00746">
    <property type="entry name" value="SprT"/>
    <property type="match status" value="1"/>
</dbReference>
<dbReference type="InterPro" id="IPR006640">
    <property type="entry name" value="SprT-like_domain"/>
</dbReference>
<dbReference type="InterPro" id="IPR035240">
    <property type="entry name" value="SprT_Zn_ribbon"/>
</dbReference>
<dbReference type="InterPro" id="IPR023483">
    <property type="entry name" value="Uncharacterised_SprT"/>
</dbReference>
<dbReference type="NCBIfam" id="NF003421">
    <property type="entry name" value="PRK04860.1"/>
    <property type="match status" value="1"/>
</dbReference>
<dbReference type="PANTHER" id="PTHR38773">
    <property type="entry name" value="PROTEIN SPRT"/>
    <property type="match status" value="1"/>
</dbReference>
<dbReference type="PANTHER" id="PTHR38773:SF1">
    <property type="entry name" value="PROTEIN SPRT"/>
    <property type="match status" value="1"/>
</dbReference>
<dbReference type="Pfam" id="PF10263">
    <property type="entry name" value="SprT-like"/>
    <property type="match status" value="1"/>
</dbReference>
<dbReference type="Pfam" id="PF17283">
    <property type="entry name" value="Zn_ribbon_SprT"/>
    <property type="match status" value="1"/>
</dbReference>
<dbReference type="SMART" id="SM00731">
    <property type="entry name" value="SprT"/>
    <property type="match status" value="1"/>
</dbReference>
<dbReference type="PROSITE" id="PS00142">
    <property type="entry name" value="ZINC_PROTEASE"/>
    <property type="match status" value="1"/>
</dbReference>
<organism>
    <name type="scientific">Enterobacter sp. (strain 638)</name>
    <dbReference type="NCBI Taxonomy" id="399742"/>
    <lineage>
        <taxon>Bacteria</taxon>
        <taxon>Pseudomonadati</taxon>
        <taxon>Pseudomonadota</taxon>
        <taxon>Gammaproteobacteria</taxon>
        <taxon>Enterobacterales</taxon>
        <taxon>Enterobacteriaceae</taxon>
        <taxon>Enterobacter</taxon>
    </lineage>
</organism>